<name>LOLA_AERS4</name>
<sequence length="202" mass="22880">MKKQLLIGSVLLVASSQVWADAASSLKQKLADVSLFSAKFAQTVYDSKGKELQKAGGDLLVQRPNRFNWHTTSPDESLIVADGKDVWVYDPFVEQVTALKLKDAVLNTPFILIAGNDDKFWKHYDVTQEGNVYTVTSRNKDELIASFRVTFDRQNNISRFDVKEAQGQWSEFTLSSFNRKPVLKGNEFVFKIPKGVELDDQR</sequence>
<keyword id="KW-0143">Chaperone</keyword>
<keyword id="KW-0574">Periplasm</keyword>
<keyword id="KW-0653">Protein transport</keyword>
<keyword id="KW-0732">Signal</keyword>
<keyword id="KW-0813">Transport</keyword>
<comment type="function">
    <text evidence="1">Participates in the translocation of lipoproteins from the inner membrane to the outer membrane. Only forms a complex with a lipoprotein if the residue after the N-terminal Cys is not an aspartate (The Asp acts as a targeting signal to indicate that the lipoprotein should stay in the inner membrane).</text>
</comment>
<comment type="subunit">
    <text evidence="1">Monomer.</text>
</comment>
<comment type="subcellular location">
    <subcellularLocation>
        <location evidence="1">Periplasm</location>
    </subcellularLocation>
</comment>
<comment type="similarity">
    <text evidence="1">Belongs to the LolA family.</text>
</comment>
<accession>A4SNK8</accession>
<gene>
    <name evidence="1" type="primary">lolA</name>
    <name type="ordered locus">ASA_2437</name>
</gene>
<dbReference type="EMBL" id="CP000644">
    <property type="protein sequence ID" value="ABO90480.1"/>
    <property type="molecule type" value="Genomic_DNA"/>
</dbReference>
<dbReference type="RefSeq" id="WP_005310741.1">
    <property type="nucleotide sequence ID" value="NC_009348.1"/>
</dbReference>
<dbReference type="SMR" id="A4SNK8"/>
<dbReference type="STRING" id="29491.GCA_000820065_01490"/>
<dbReference type="GeneID" id="79880224"/>
<dbReference type="KEGG" id="asa:ASA_2437"/>
<dbReference type="eggNOG" id="COG2834">
    <property type="taxonomic scope" value="Bacteria"/>
</dbReference>
<dbReference type="HOGENOM" id="CLU_087560_0_0_6"/>
<dbReference type="Proteomes" id="UP000000225">
    <property type="component" value="Chromosome"/>
</dbReference>
<dbReference type="GO" id="GO:0030288">
    <property type="term" value="C:outer membrane-bounded periplasmic space"/>
    <property type="evidence" value="ECO:0007669"/>
    <property type="project" value="TreeGrafter"/>
</dbReference>
<dbReference type="GO" id="GO:0044874">
    <property type="term" value="P:lipoprotein localization to outer membrane"/>
    <property type="evidence" value="ECO:0007669"/>
    <property type="project" value="UniProtKB-UniRule"/>
</dbReference>
<dbReference type="GO" id="GO:0042953">
    <property type="term" value="P:lipoprotein transport"/>
    <property type="evidence" value="ECO:0007669"/>
    <property type="project" value="InterPro"/>
</dbReference>
<dbReference type="CDD" id="cd16325">
    <property type="entry name" value="LolA"/>
    <property type="match status" value="1"/>
</dbReference>
<dbReference type="Gene3D" id="2.50.20.10">
    <property type="entry name" value="Lipoprotein localisation LolA/LolB/LppX"/>
    <property type="match status" value="1"/>
</dbReference>
<dbReference type="HAMAP" id="MF_00240">
    <property type="entry name" value="LolA"/>
    <property type="match status" value="1"/>
</dbReference>
<dbReference type="InterPro" id="IPR029046">
    <property type="entry name" value="LolA/LolB/LppX"/>
</dbReference>
<dbReference type="InterPro" id="IPR004564">
    <property type="entry name" value="OM_lipoprot_carrier_LolA-like"/>
</dbReference>
<dbReference type="InterPro" id="IPR018323">
    <property type="entry name" value="OM_lipoprot_carrier_LolA_Pbac"/>
</dbReference>
<dbReference type="NCBIfam" id="TIGR00547">
    <property type="entry name" value="lolA"/>
    <property type="match status" value="1"/>
</dbReference>
<dbReference type="PANTHER" id="PTHR35869">
    <property type="entry name" value="OUTER-MEMBRANE LIPOPROTEIN CARRIER PROTEIN"/>
    <property type="match status" value="1"/>
</dbReference>
<dbReference type="PANTHER" id="PTHR35869:SF1">
    <property type="entry name" value="OUTER-MEMBRANE LIPOPROTEIN CARRIER PROTEIN"/>
    <property type="match status" value="1"/>
</dbReference>
<dbReference type="Pfam" id="PF03548">
    <property type="entry name" value="LolA"/>
    <property type="match status" value="1"/>
</dbReference>
<dbReference type="SUPFAM" id="SSF89392">
    <property type="entry name" value="Prokaryotic lipoproteins and lipoprotein localization factors"/>
    <property type="match status" value="1"/>
</dbReference>
<proteinExistence type="inferred from homology"/>
<reference key="1">
    <citation type="journal article" date="2008" name="BMC Genomics">
        <title>The genome of Aeromonas salmonicida subsp. salmonicida A449: insights into the evolution of a fish pathogen.</title>
        <authorList>
            <person name="Reith M.E."/>
            <person name="Singh R.K."/>
            <person name="Curtis B."/>
            <person name="Boyd J.M."/>
            <person name="Bouevitch A."/>
            <person name="Kimball J."/>
            <person name="Munholland J."/>
            <person name="Murphy C."/>
            <person name="Sarty D."/>
            <person name="Williams J."/>
            <person name="Nash J.H."/>
            <person name="Johnson S.C."/>
            <person name="Brown L.L."/>
        </authorList>
    </citation>
    <scope>NUCLEOTIDE SEQUENCE [LARGE SCALE GENOMIC DNA]</scope>
    <source>
        <strain>A449</strain>
    </source>
</reference>
<feature type="signal peptide" evidence="1">
    <location>
        <begin position="1"/>
        <end position="20"/>
    </location>
</feature>
<feature type="chain" id="PRO_0000336651" description="Outer-membrane lipoprotein carrier protein">
    <location>
        <begin position="21"/>
        <end position="202"/>
    </location>
</feature>
<organism>
    <name type="scientific">Aeromonas salmonicida (strain A449)</name>
    <dbReference type="NCBI Taxonomy" id="382245"/>
    <lineage>
        <taxon>Bacteria</taxon>
        <taxon>Pseudomonadati</taxon>
        <taxon>Pseudomonadota</taxon>
        <taxon>Gammaproteobacteria</taxon>
        <taxon>Aeromonadales</taxon>
        <taxon>Aeromonadaceae</taxon>
        <taxon>Aeromonas</taxon>
    </lineage>
</organism>
<evidence type="ECO:0000255" key="1">
    <source>
        <dbReference type="HAMAP-Rule" id="MF_00240"/>
    </source>
</evidence>
<protein>
    <recommendedName>
        <fullName evidence="1">Outer-membrane lipoprotein carrier protein</fullName>
    </recommendedName>
</protein>